<gene>
    <name type="primary">Cd200</name>
    <name type="synonym">Mox2</name>
</gene>
<protein>
    <recommendedName>
        <fullName>OX-2 membrane glycoprotein</fullName>
    </recommendedName>
    <alternativeName>
        <fullName>MRC OX-2 antigen</fullName>
    </alternativeName>
    <cdAntigenName>CD200</cdAntigenName>
</protein>
<comment type="function">
    <text>Costimulates T-cell proliferation. May regulate myeloid cell activity in a variety of tissues.</text>
</comment>
<comment type="subunit">
    <text>CD200 and CD200R1 interact via their respective N-terminal Ig-like domains.</text>
</comment>
<comment type="subcellular location">
    <subcellularLocation>
        <location>Cell membrane</location>
        <topology>Single-pass type I membrane protein</topology>
    </subcellularLocation>
</comment>
<comment type="tissue specificity">
    <text>Found on the surface of neurons, thymocytes, B-cells and follicular dendritic cells.</text>
</comment>
<proteinExistence type="evidence at transcript level"/>
<evidence type="ECO:0000255" key="1"/>
<evidence type="ECO:0000255" key="2">
    <source>
        <dbReference type="PROSITE-ProRule" id="PRU00114"/>
    </source>
</evidence>
<accession>P04218</accession>
<feature type="signal peptide" evidence="1">
    <location>
        <begin position="1"/>
        <end position="30"/>
    </location>
</feature>
<feature type="chain" id="PRO_0000015126" description="OX-2 membrane glycoprotein">
    <location>
        <begin position="31"/>
        <end position="278"/>
    </location>
</feature>
<feature type="topological domain" description="Extracellular" evidence="1">
    <location>
        <begin position="31"/>
        <end position="232"/>
    </location>
</feature>
<feature type="transmembrane region" description="Helical" evidence="1">
    <location>
        <begin position="233"/>
        <end position="259"/>
    </location>
</feature>
<feature type="topological domain" description="Cytoplasmic" evidence="1">
    <location>
        <begin position="260"/>
        <end position="278"/>
    </location>
</feature>
<feature type="domain" description="Ig-like V-type">
    <location>
        <begin position="31"/>
        <end position="141"/>
    </location>
</feature>
<feature type="domain" description="Ig-like C2-type">
    <location>
        <begin position="142"/>
        <end position="232"/>
    </location>
</feature>
<feature type="glycosylation site" description="N-linked (GlcNAc...) asparagine" evidence="1">
    <location>
        <position position="95"/>
    </location>
</feature>
<feature type="glycosylation site" description="N-linked (GlcNAc...) asparagine" evidence="1">
    <location>
        <position position="103"/>
    </location>
</feature>
<feature type="glycosylation site" description="N-linked (GlcNAc...) asparagine" evidence="1">
    <location>
        <position position="110"/>
    </location>
</feature>
<feature type="glycosylation site" description="N-linked (GlcNAc...) asparagine" evidence="1">
    <location>
        <position position="157"/>
    </location>
</feature>
<feature type="glycosylation site" description="N-linked (GlcNAc...) asparagine" evidence="1">
    <location>
        <position position="181"/>
    </location>
</feature>
<feature type="glycosylation site" description="N-linked (GlcNAc...) asparagine" evidence="1">
    <location>
        <position position="190"/>
    </location>
</feature>
<feature type="disulfide bond" evidence="2">
    <location>
        <begin position="51"/>
        <end position="121"/>
    </location>
</feature>
<feature type="disulfide bond" evidence="2">
    <location>
        <begin position="118"/>
        <end position="136"/>
    </location>
</feature>
<feature type="disulfide bond" evidence="2">
    <location>
        <begin position="160"/>
        <end position="214"/>
    </location>
</feature>
<dbReference type="EMBL" id="X01785">
    <property type="protein sequence ID" value="CAA25925.1"/>
    <property type="molecule type" value="mRNA"/>
</dbReference>
<dbReference type="PIR" id="A02114">
    <property type="entry name" value="TDRTOX"/>
</dbReference>
<dbReference type="SMR" id="P04218"/>
<dbReference type="FunCoup" id="P04218">
    <property type="interactions" value="216"/>
</dbReference>
<dbReference type="IntAct" id="P04218">
    <property type="interactions" value="2"/>
</dbReference>
<dbReference type="MINT" id="P04218"/>
<dbReference type="STRING" id="10116.ENSRNOP00000055253"/>
<dbReference type="GlyCosmos" id="P04218">
    <property type="glycosylation" value="6 sites, No reported glycans"/>
</dbReference>
<dbReference type="GlyGen" id="P04218">
    <property type="glycosylation" value="6 sites"/>
</dbReference>
<dbReference type="PhosphoSitePlus" id="P04218"/>
<dbReference type="PaxDb" id="10116-ENSRNOP00000055253"/>
<dbReference type="UCSC" id="RGD:3104">
    <property type="organism name" value="rat"/>
</dbReference>
<dbReference type="AGR" id="RGD:3104"/>
<dbReference type="RGD" id="3104">
    <property type="gene designation" value="Cd200"/>
</dbReference>
<dbReference type="eggNOG" id="ENOG502S5DU">
    <property type="taxonomic scope" value="Eukaryota"/>
</dbReference>
<dbReference type="InParanoid" id="P04218"/>
<dbReference type="PhylomeDB" id="P04218"/>
<dbReference type="Reactome" id="R-RNO-198933">
    <property type="pathway name" value="Immunoregulatory interactions between a Lymphoid and a non-Lymphoid cell"/>
</dbReference>
<dbReference type="PRO" id="PR:P04218"/>
<dbReference type="Proteomes" id="UP000002494">
    <property type="component" value="Unplaced"/>
</dbReference>
<dbReference type="GO" id="GO:0030424">
    <property type="term" value="C:axon"/>
    <property type="evidence" value="ECO:0000266"/>
    <property type="project" value="RGD"/>
</dbReference>
<dbReference type="GO" id="GO:0044297">
    <property type="term" value="C:cell body"/>
    <property type="evidence" value="ECO:0000266"/>
    <property type="project" value="RGD"/>
</dbReference>
<dbReference type="GO" id="GO:0009986">
    <property type="term" value="C:cell surface"/>
    <property type="evidence" value="ECO:0000314"/>
    <property type="project" value="ARUK-UCL"/>
</dbReference>
<dbReference type="GO" id="GO:0043005">
    <property type="term" value="C:neuron projection"/>
    <property type="evidence" value="ECO:0000314"/>
    <property type="project" value="ARUK-UCL"/>
</dbReference>
<dbReference type="GO" id="GO:0043025">
    <property type="term" value="C:neuronal cell body"/>
    <property type="evidence" value="ECO:0000314"/>
    <property type="project" value="ARUK-UCL"/>
</dbReference>
<dbReference type="GO" id="GO:0005886">
    <property type="term" value="C:plasma membrane"/>
    <property type="evidence" value="ECO:0007669"/>
    <property type="project" value="UniProtKB-SubCell"/>
</dbReference>
<dbReference type="GO" id="GO:0014069">
    <property type="term" value="C:postsynaptic density"/>
    <property type="evidence" value="ECO:0000266"/>
    <property type="project" value="RGD"/>
</dbReference>
<dbReference type="GO" id="GO:0048786">
    <property type="term" value="C:presynaptic active zone"/>
    <property type="evidence" value="ECO:0000266"/>
    <property type="project" value="RGD"/>
</dbReference>
<dbReference type="GO" id="GO:0098632">
    <property type="term" value="F:cell-cell adhesion mediator activity"/>
    <property type="evidence" value="ECO:0000318"/>
    <property type="project" value="GO_Central"/>
</dbReference>
<dbReference type="GO" id="GO:0086080">
    <property type="term" value="F:protein binding involved in heterotypic cell-cell adhesion"/>
    <property type="evidence" value="ECO:0000353"/>
    <property type="project" value="ARUK-UCL"/>
</dbReference>
<dbReference type="GO" id="GO:0098609">
    <property type="term" value="P:cell-cell adhesion"/>
    <property type="evidence" value="ECO:0000316"/>
    <property type="project" value="ARUK-UCL"/>
</dbReference>
<dbReference type="GO" id="GO:0034113">
    <property type="term" value="P:heterotypic cell-cell adhesion"/>
    <property type="evidence" value="ECO:0000316"/>
    <property type="project" value="ARUK-UCL"/>
</dbReference>
<dbReference type="GO" id="GO:0008285">
    <property type="term" value="P:negative regulation of cell population proliferation"/>
    <property type="evidence" value="ECO:0000266"/>
    <property type="project" value="RGD"/>
</dbReference>
<dbReference type="GO" id="GO:0032715">
    <property type="term" value="P:negative regulation of interleukin-6 production"/>
    <property type="evidence" value="ECO:0000316"/>
    <property type="project" value="ARUK-UCL"/>
</dbReference>
<dbReference type="GO" id="GO:0043031">
    <property type="term" value="P:negative regulation of macrophage activation"/>
    <property type="evidence" value="ECO:0000266"/>
    <property type="project" value="RGD"/>
</dbReference>
<dbReference type="GO" id="GO:1905522">
    <property type="term" value="P:negative regulation of macrophage migration"/>
    <property type="evidence" value="ECO:0000316"/>
    <property type="project" value="ARUK-UCL"/>
</dbReference>
<dbReference type="GO" id="GO:1904465">
    <property type="term" value="P:negative regulation of matrix metallopeptidase secretion"/>
    <property type="evidence" value="ECO:0000266"/>
    <property type="project" value="RGD"/>
</dbReference>
<dbReference type="GO" id="GO:0150079">
    <property type="term" value="P:negative regulation of neuroinflammatory response"/>
    <property type="evidence" value="ECO:0000316"/>
    <property type="project" value="ARUK-UCL"/>
</dbReference>
<dbReference type="GO" id="GO:2000405">
    <property type="term" value="P:negative regulation of T cell migration"/>
    <property type="evidence" value="ECO:0000316"/>
    <property type="project" value="ARUK-UCL"/>
</dbReference>
<dbReference type="GO" id="GO:0071636">
    <property type="term" value="P:positive regulation of transforming growth factor beta production"/>
    <property type="evidence" value="ECO:0000266"/>
    <property type="project" value="RGD"/>
</dbReference>
<dbReference type="GO" id="GO:0050776">
    <property type="term" value="P:regulation of immune response"/>
    <property type="evidence" value="ECO:0007669"/>
    <property type="project" value="InterPro"/>
</dbReference>
<dbReference type="GO" id="GO:0150077">
    <property type="term" value="P:regulation of neuroinflammatory response"/>
    <property type="evidence" value="ECO:0000316"/>
    <property type="project" value="ARUK-UCL"/>
</dbReference>
<dbReference type="CDD" id="cd05846">
    <property type="entry name" value="IgV_1_MRC-OX-2_like"/>
    <property type="match status" value="1"/>
</dbReference>
<dbReference type="Gene3D" id="2.60.40.10">
    <property type="entry name" value="Immunoglobulins"/>
    <property type="match status" value="2"/>
</dbReference>
<dbReference type="InterPro" id="IPR033321">
    <property type="entry name" value="CD200_Ig_V_dom"/>
</dbReference>
<dbReference type="InterPro" id="IPR007110">
    <property type="entry name" value="Ig-like_dom"/>
</dbReference>
<dbReference type="InterPro" id="IPR036179">
    <property type="entry name" value="Ig-like_dom_sf"/>
</dbReference>
<dbReference type="InterPro" id="IPR013783">
    <property type="entry name" value="Ig-like_fold"/>
</dbReference>
<dbReference type="InterPro" id="IPR003599">
    <property type="entry name" value="Ig_sub"/>
</dbReference>
<dbReference type="InterPro" id="IPR013106">
    <property type="entry name" value="Ig_V-set"/>
</dbReference>
<dbReference type="InterPro" id="IPR013151">
    <property type="entry name" value="Immunoglobulin_dom"/>
</dbReference>
<dbReference type="InterPro" id="IPR047164">
    <property type="entry name" value="OX2G-like"/>
</dbReference>
<dbReference type="PANTHER" id="PTHR46841">
    <property type="entry name" value="OX-2 MEMBRANE GLYCOPROTEIN"/>
    <property type="match status" value="1"/>
</dbReference>
<dbReference type="PANTHER" id="PTHR46841:SF3">
    <property type="entry name" value="OX-2 MEMBRANE GLYCOPROTEIN"/>
    <property type="match status" value="1"/>
</dbReference>
<dbReference type="Pfam" id="PF00047">
    <property type="entry name" value="ig"/>
    <property type="match status" value="2"/>
</dbReference>
<dbReference type="SMART" id="SM00409">
    <property type="entry name" value="IG"/>
    <property type="match status" value="1"/>
</dbReference>
<dbReference type="SMART" id="SM00406">
    <property type="entry name" value="IGv"/>
    <property type="match status" value="1"/>
</dbReference>
<dbReference type="SUPFAM" id="SSF48726">
    <property type="entry name" value="Immunoglobulin"/>
    <property type="match status" value="2"/>
</dbReference>
<dbReference type="PROSITE" id="PS50835">
    <property type="entry name" value="IG_LIKE"/>
    <property type="match status" value="1"/>
</dbReference>
<reference key="1">
    <citation type="journal article" date="1985" name="EMBO J.">
        <title>MRC OX-2 antigen: a lymphoid/neuronal membrane glycoprotein with a structure like a single immunoglobulin light chain.</title>
        <authorList>
            <person name="Clark M.J."/>
            <person name="Gagnon J."/>
            <person name="Williams A.F."/>
            <person name="Barclay A.N."/>
        </authorList>
    </citation>
    <scope>NUCLEOTIDE SEQUENCE [MRNA]</scope>
</reference>
<sequence>MGSPVFRRPFCHLSTYSLLWAIAAVALSTAQVEVVTQDERKLLHTTASLRCSLKTTQEPLIVTWQKKKAVGPENMVTYSKAHGVVIQPTYKDRINITELGLLNTSITFWNTTLDDEGCYMCLFNMFGSGKVSGTACLTLYVQPIVHLHYNYFEDHLNITCSATARPAPAISWKGTGSGIENSTESHSHSNGTTSVTSILRVKDPKTQVGKEVICQVLYLGNVIDYKQSLDKGFWFSVPLLLSIVSLVILLVLISILLYWKRHRNQERGESSQGMQRMK</sequence>
<name>OX2G_RAT</name>
<organism>
    <name type="scientific">Rattus norvegicus</name>
    <name type="common">Rat</name>
    <dbReference type="NCBI Taxonomy" id="10116"/>
    <lineage>
        <taxon>Eukaryota</taxon>
        <taxon>Metazoa</taxon>
        <taxon>Chordata</taxon>
        <taxon>Craniata</taxon>
        <taxon>Vertebrata</taxon>
        <taxon>Euteleostomi</taxon>
        <taxon>Mammalia</taxon>
        <taxon>Eutheria</taxon>
        <taxon>Euarchontoglires</taxon>
        <taxon>Glires</taxon>
        <taxon>Rodentia</taxon>
        <taxon>Myomorpha</taxon>
        <taxon>Muroidea</taxon>
        <taxon>Muridae</taxon>
        <taxon>Murinae</taxon>
        <taxon>Rattus</taxon>
    </lineage>
</organism>
<keyword id="KW-1003">Cell membrane</keyword>
<keyword id="KW-1015">Disulfide bond</keyword>
<keyword id="KW-0325">Glycoprotein</keyword>
<keyword id="KW-0393">Immunoglobulin domain</keyword>
<keyword id="KW-0472">Membrane</keyword>
<keyword id="KW-1185">Reference proteome</keyword>
<keyword id="KW-0732">Signal</keyword>
<keyword id="KW-0812">Transmembrane</keyword>
<keyword id="KW-1133">Transmembrane helix</keyword>